<protein>
    <recommendedName>
        <fullName>Nucleolar protein 9</fullName>
    </recommendedName>
    <alternativeName>
        <fullName>Pumilio domain-containing protein NOP9</fullName>
    </alternativeName>
</protein>
<organism>
    <name type="scientific">Ajellomyces dermatitidis (strain ER-3 / ATCC MYA-2586)</name>
    <name type="common">Blastomyces dermatitidis</name>
    <dbReference type="NCBI Taxonomy" id="559297"/>
    <lineage>
        <taxon>Eukaryota</taxon>
        <taxon>Fungi</taxon>
        <taxon>Dikarya</taxon>
        <taxon>Ascomycota</taxon>
        <taxon>Pezizomycotina</taxon>
        <taxon>Eurotiomycetes</taxon>
        <taxon>Eurotiomycetidae</taxon>
        <taxon>Onygenales</taxon>
        <taxon>Ajellomycetaceae</taxon>
        <taxon>Blastomyces</taxon>
    </lineage>
</organism>
<dbReference type="EMBL" id="EQ999973">
    <property type="protein sequence ID" value="EEQ84346.1"/>
    <property type="molecule type" value="Genomic_DNA"/>
</dbReference>
<dbReference type="SMR" id="C5G8V2"/>
<dbReference type="STRING" id="559297.C5G8V2"/>
<dbReference type="VEuPathDB" id="FungiDB:BDCG_01151"/>
<dbReference type="eggNOG" id="KOG2188">
    <property type="taxonomic scope" value="Eukaryota"/>
</dbReference>
<dbReference type="HOGENOM" id="CLU_008720_1_1_1"/>
<dbReference type="OMA" id="HHLVRNF"/>
<dbReference type="GO" id="GO:0030686">
    <property type="term" value="C:90S preribosome"/>
    <property type="evidence" value="ECO:0007669"/>
    <property type="project" value="TreeGrafter"/>
</dbReference>
<dbReference type="GO" id="GO:0005730">
    <property type="term" value="C:nucleolus"/>
    <property type="evidence" value="ECO:0007669"/>
    <property type="project" value="UniProtKB-SubCell"/>
</dbReference>
<dbReference type="GO" id="GO:0030688">
    <property type="term" value="C:preribosome, small subunit precursor"/>
    <property type="evidence" value="ECO:0007669"/>
    <property type="project" value="TreeGrafter"/>
</dbReference>
<dbReference type="GO" id="GO:0003723">
    <property type="term" value="F:RNA binding"/>
    <property type="evidence" value="ECO:0007669"/>
    <property type="project" value="InterPro"/>
</dbReference>
<dbReference type="GO" id="GO:0000480">
    <property type="term" value="P:endonucleolytic cleavage in 5'-ETS of tricistronic rRNA transcript (SSU-rRNA, 5.8S rRNA, LSU-rRNA)"/>
    <property type="evidence" value="ECO:0007669"/>
    <property type="project" value="TreeGrafter"/>
</dbReference>
<dbReference type="GO" id="GO:0000447">
    <property type="term" value="P:endonucleolytic cleavage in ITS1 to separate SSU-rRNA from 5.8S rRNA and LSU-rRNA from tricistronic rRNA transcript (SSU-rRNA, 5.8S rRNA, LSU-rRNA)"/>
    <property type="evidence" value="ECO:0007669"/>
    <property type="project" value="TreeGrafter"/>
</dbReference>
<dbReference type="GO" id="GO:0000472">
    <property type="term" value="P:endonucleolytic cleavage to generate mature 5'-end of SSU-rRNA from (SSU-rRNA, 5.8S rRNA, LSU-rRNA)"/>
    <property type="evidence" value="ECO:0007669"/>
    <property type="project" value="TreeGrafter"/>
</dbReference>
<dbReference type="GO" id="GO:0000056">
    <property type="term" value="P:ribosomal small subunit export from nucleus"/>
    <property type="evidence" value="ECO:0007669"/>
    <property type="project" value="TreeGrafter"/>
</dbReference>
<dbReference type="Gene3D" id="1.25.10.10">
    <property type="entry name" value="Leucine-rich Repeat Variant"/>
    <property type="match status" value="3"/>
</dbReference>
<dbReference type="InterPro" id="IPR011989">
    <property type="entry name" value="ARM-like"/>
</dbReference>
<dbReference type="InterPro" id="IPR016024">
    <property type="entry name" value="ARM-type_fold"/>
</dbReference>
<dbReference type="InterPro" id="IPR040000">
    <property type="entry name" value="NOP9"/>
</dbReference>
<dbReference type="InterPro" id="IPR001313">
    <property type="entry name" value="Pumilio_RNA-bd_rpt"/>
</dbReference>
<dbReference type="PANTHER" id="PTHR13102">
    <property type="entry name" value="NUCLEOLAR PROTEIN 9"/>
    <property type="match status" value="1"/>
</dbReference>
<dbReference type="PANTHER" id="PTHR13102:SF0">
    <property type="entry name" value="NUCLEOLAR PROTEIN 9"/>
    <property type="match status" value="1"/>
</dbReference>
<dbReference type="Pfam" id="PF22493">
    <property type="entry name" value="PUF_NOP9"/>
    <property type="match status" value="1"/>
</dbReference>
<dbReference type="SMART" id="SM00025">
    <property type="entry name" value="Pumilio"/>
    <property type="match status" value="5"/>
</dbReference>
<dbReference type="SUPFAM" id="SSF48371">
    <property type="entry name" value="ARM repeat"/>
    <property type="match status" value="1"/>
</dbReference>
<evidence type="ECO:0000250" key="1"/>
<evidence type="ECO:0000256" key="2">
    <source>
        <dbReference type="SAM" id="MobiDB-lite"/>
    </source>
</evidence>
<evidence type="ECO:0000305" key="3"/>
<comment type="function">
    <text evidence="1">RNA-binding nucleolar protein required for pre-rRNA processing. Involved in production of 18S rRNA and assembly of small ribosomal subunit (By similarity).</text>
</comment>
<comment type="subcellular location">
    <subcellularLocation>
        <location evidence="1">Nucleus</location>
        <location evidence="1">Nucleolus</location>
    </subcellularLocation>
</comment>
<comment type="similarity">
    <text evidence="3">Belongs to the NOP9 family.</text>
</comment>
<reference key="1">
    <citation type="journal article" date="2015" name="PLoS Genet.">
        <title>The dynamic genome and transcriptome of the human fungal pathogen Blastomyces and close relative Emmonsia.</title>
        <authorList>
            <person name="Munoz J.F."/>
            <person name="Gauthier G.M."/>
            <person name="Desjardins C.A."/>
            <person name="Gallo J.E."/>
            <person name="Holder J."/>
            <person name="Sullivan T.D."/>
            <person name="Marty A.J."/>
            <person name="Carmen J.C."/>
            <person name="Chen Z."/>
            <person name="Ding L."/>
            <person name="Gujja S."/>
            <person name="Magrini V."/>
            <person name="Misas E."/>
            <person name="Mitreva M."/>
            <person name="Priest M."/>
            <person name="Saif S."/>
            <person name="Whiston E.A."/>
            <person name="Young S."/>
            <person name="Zeng Q."/>
            <person name="Goldman W.E."/>
            <person name="Mardis E.R."/>
            <person name="Taylor J.W."/>
            <person name="McEwen J.G."/>
            <person name="Clay O.K."/>
            <person name="Klein B.S."/>
            <person name="Cuomo C.A."/>
        </authorList>
    </citation>
    <scope>NUCLEOTIDE SEQUENCE [LARGE SCALE GENOMIC DNA]</scope>
    <source>
        <strain>ER-3 / ATCC MYA-2586</strain>
    </source>
</reference>
<accession>C5G8V2</accession>
<feature type="chain" id="PRO_0000407791" description="Nucleolar protein 9">
    <location>
        <begin position="1"/>
        <end position="682"/>
    </location>
</feature>
<feature type="repeat" description="Pumilio 1">
    <location>
        <begin position="108"/>
        <end position="143"/>
    </location>
</feature>
<feature type="repeat" description="Pumilio 2">
    <location>
        <begin position="347"/>
        <end position="382"/>
    </location>
</feature>
<feature type="repeat" description="Pumilio 3">
    <location>
        <begin position="383"/>
        <end position="419"/>
    </location>
</feature>
<feature type="repeat" description="Pumilio 4">
    <location>
        <begin position="524"/>
        <end position="562"/>
    </location>
</feature>
<feature type="repeat" description="Pumilio 5">
    <location>
        <begin position="563"/>
        <end position="600"/>
    </location>
</feature>
<feature type="region of interest" description="Disordered" evidence="2">
    <location>
        <begin position="1"/>
        <end position="46"/>
    </location>
</feature>
<feature type="region of interest" description="Disordered" evidence="2">
    <location>
        <begin position="249"/>
        <end position="272"/>
    </location>
</feature>
<feature type="compositionally biased region" description="Basic residues" evidence="2">
    <location>
        <begin position="1"/>
        <end position="15"/>
    </location>
</feature>
<feature type="compositionally biased region" description="Basic and acidic residues" evidence="2">
    <location>
        <begin position="16"/>
        <end position="35"/>
    </location>
</feature>
<feature type="compositionally biased region" description="Basic and acidic residues" evidence="2">
    <location>
        <begin position="250"/>
        <end position="272"/>
    </location>
</feature>
<keyword id="KW-0539">Nucleus</keyword>
<keyword id="KW-0677">Repeat</keyword>
<keyword id="KW-0690">Ribosome biogenesis</keyword>
<keyword id="KW-0698">rRNA processing</keyword>
<gene>
    <name type="primary">NOP9</name>
    <name type="ORF">BDCG_01151</name>
</gene>
<proteinExistence type="inferred from homology"/>
<name>NOP9_AJEDR</name>
<sequence>MPRERQKRGRRAEAKRKRDDEVGDRTAPKRQKASEGDNDFNPLHSQAKIGDDYIPLEEEPASSMDTPFYGLLDPDEQEYFSHASGLLELNQFETEEEKSIFIERVYEEADGKELKIACSQSCSRLMEKLISASTVSQIKSLFNKFVGQFLNLVQHRFASHCCESLFLRAAPYVTLEMKKKSAEKNDNEGEDSSANLRLEDLFLAVLSELEGNWGYLLTERFASHTIRVLLLILAGEQLDNPSKATVIASRKKENLDKPKVTQRDKSASDRRAVPPSFNAALEKMMNDLVTGLDNTYLRALATHPVGNPVLQVLLSVELTHLGKSKARDPDSVFRRLVPDENLEEGSESAAFIKGLFYDPVGSRLLETMVQLAPGKFFKTFYKALVQERIGSLSRNEIAGHVVARILERLSKEDLKSSMDLILPEVLSLVKRSRFTVIKTLIERGVIRGVDLRPLADSLLLAFGTDPIARINNVLKLHHLNEENDDTKRSSKNSTPEQLHGSLLAQTMLKAPGPLSELIQSSLLAVTLETLIAIAKDPVASHVLQDALTLPTSTIQFRRQITSRFSGKMAELALDSSGSHVVDAVWSATENLIFIKQRFAEELLANERPLRDSFVGRAVWKNWSMDLYKRRRGHWIAVAKGLESVNPSNSENRQPPKSNLDLARARFAEKSNTSTPKKITATF</sequence>